<reference key="1">
    <citation type="journal article" date="1999" name="J. Biol. Chem.">
        <title>Saccharomyces cerevisiae GNA1, an essential gene encoding a novel acetyltransferase involved in UDP-N-acetylglucosamine synthesis.</title>
        <authorList>
            <person name="Mio T."/>
            <person name="Yamada-Okabe T."/>
            <person name="Arisawa M."/>
            <person name="Yamada-Okabe H."/>
        </authorList>
    </citation>
    <scope>NUCLEOTIDE SEQUENCE [MRNA]</scope>
</reference>
<reference key="2">
    <citation type="journal article" date="1998" name="Science">
        <title>Genome sequence of the nematode C. elegans: a platform for investigating biology.</title>
        <authorList>
            <consortium name="The C. elegans sequencing consortium"/>
        </authorList>
    </citation>
    <scope>NUCLEOTIDE SEQUENCE [LARGE SCALE GENOMIC DNA]</scope>
    <source>
        <strain>Bristol N2</strain>
    </source>
</reference>
<feature type="chain" id="PRO_0000074556" description="Glucosamine 6-phosphate N-acetyltransferase">
    <location>
        <begin position="1"/>
        <end position="165"/>
    </location>
</feature>
<feature type="domain" description="N-acetyltransferase" evidence="2">
    <location>
        <begin position="22"/>
        <end position="165"/>
    </location>
</feature>
<feature type="binding site" evidence="1">
    <location>
        <position position="44"/>
    </location>
    <ligand>
        <name>substrate</name>
    </ligand>
</feature>
<feature type="binding site" evidence="1">
    <location>
        <begin position="92"/>
        <end position="95"/>
    </location>
    <ligand>
        <name>substrate</name>
    </ligand>
</feature>
<feature type="binding site" evidence="1">
    <location>
        <begin position="104"/>
        <end position="106"/>
    </location>
    <ligand>
        <name>substrate</name>
    </ligand>
</feature>
<feature type="binding site" evidence="1">
    <location>
        <begin position="114"/>
        <end position="119"/>
    </location>
    <ligand>
        <name>acetyl-CoA</name>
        <dbReference type="ChEBI" id="CHEBI:57288"/>
    </ligand>
</feature>
<feature type="binding site" evidence="1">
    <location>
        <begin position="135"/>
        <end position="136"/>
    </location>
    <ligand>
        <name>substrate</name>
    </ligand>
</feature>
<feature type="binding site" evidence="1">
    <location>
        <position position="164"/>
    </location>
    <ligand>
        <name>substrate</name>
    </ligand>
</feature>
<feature type="strand" evidence="4">
    <location>
        <begin position="3"/>
        <end position="5"/>
    </location>
</feature>
<feature type="helix" evidence="4">
    <location>
        <begin position="7"/>
        <end position="10"/>
    </location>
</feature>
<feature type="helix" evidence="4">
    <location>
        <begin position="11"/>
        <end position="13"/>
    </location>
</feature>
<feature type="strand" evidence="4">
    <location>
        <begin position="22"/>
        <end position="26"/>
    </location>
</feature>
<feature type="helix" evidence="4">
    <location>
        <begin position="29"/>
        <end position="32"/>
    </location>
</feature>
<feature type="turn" evidence="4">
    <location>
        <begin position="33"/>
        <end position="35"/>
    </location>
</feature>
<feature type="helix" evidence="4">
    <location>
        <begin position="36"/>
        <end position="43"/>
    </location>
</feature>
<feature type="helix" evidence="4">
    <location>
        <begin position="51"/>
        <end position="62"/>
    </location>
</feature>
<feature type="strand" evidence="4">
    <location>
        <begin position="69"/>
        <end position="75"/>
    </location>
</feature>
<feature type="turn" evidence="4">
    <location>
        <begin position="76"/>
        <end position="78"/>
    </location>
</feature>
<feature type="strand" evidence="4">
    <location>
        <begin position="81"/>
        <end position="91"/>
    </location>
</feature>
<feature type="helix" evidence="4">
    <location>
        <begin position="94"/>
        <end position="97"/>
    </location>
</feature>
<feature type="strand" evidence="4">
    <location>
        <begin position="99"/>
        <end position="108"/>
    </location>
</feature>
<feature type="helix" evidence="4">
    <location>
        <begin position="110"/>
        <end position="112"/>
    </location>
</feature>
<feature type="helix" evidence="4">
    <location>
        <begin position="117"/>
        <end position="132"/>
    </location>
</feature>
<feature type="strand" evidence="4">
    <location>
        <begin position="135"/>
        <end position="139"/>
    </location>
</feature>
<feature type="helix" evidence="4">
    <location>
        <begin position="143"/>
        <end position="145"/>
    </location>
</feature>
<feature type="helix" evidence="4">
    <location>
        <begin position="146"/>
        <end position="150"/>
    </location>
</feature>
<feature type="turn" evidence="4">
    <location>
        <begin position="151"/>
        <end position="153"/>
    </location>
</feature>
<feature type="strand" evidence="4">
    <location>
        <begin position="161"/>
        <end position="163"/>
    </location>
</feature>
<gene>
    <name type="primary">gna-1</name>
    <name type="ORF">B0024.12</name>
</gene>
<accession>Q17427</accession>
<protein>
    <recommendedName>
        <fullName>Glucosamine 6-phosphate N-acetyltransferase</fullName>
        <ecNumber evidence="1">2.3.1.4</ecNumber>
    </recommendedName>
    <alternativeName>
        <fullName>Phosphoglucosamine acetylase</fullName>
    </alternativeName>
    <alternativeName>
        <fullName>Phosphoglucosamine transacetylase</fullName>
    </alternativeName>
</protein>
<keyword id="KW-0002">3D-structure</keyword>
<keyword id="KW-0012">Acyltransferase</keyword>
<keyword id="KW-1185">Reference proteome</keyword>
<keyword id="KW-0808">Transferase</keyword>
<dbReference type="EC" id="2.3.1.4" evidence="1"/>
<dbReference type="EMBL" id="AB017628">
    <property type="protein sequence ID" value="BAA36497.1"/>
    <property type="molecule type" value="mRNA"/>
</dbReference>
<dbReference type="EMBL" id="Z71178">
    <property type="protein sequence ID" value="CAA94884.1"/>
    <property type="molecule type" value="Genomic_DNA"/>
</dbReference>
<dbReference type="PIR" id="T37319">
    <property type="entry name" value="T37319"/>
</dbReference>
<dbReference type="RefSeq" id="NP_505654.1">
    <property type="nucleotide sequence ID" value="NM_073253.7"/>
</dbReference>
<dbReference type="PDB" id="4AG7">
    <property type="method" value="X-ray"/>
    <property type="resolution" value="1.55 A"/>
    <property type="chains" value="A/B=1-165"/>
</dbReference>
<dbReference type="PDB" id="4AG9">
    <property type="method" value="X-ray"/>
    <property type="resolution" value="1.76 A"/>
    <property type="chains" value="A/B=1-165"/>
</dbReference>
<dbReference type="PDBsum" id="4AG7"/>
<dbReference type="PDBsum" id="4AG9"/>
<dbReference type="SMR" id="Q17427"/>
<dbReference type="BioGRID" id="44467">
    <property type="interactions" value="7"/>
</dbReference>
<dbReference type="DIP" id="DIP-25958N"/>
<dbReference type="FunCoup" id="Q17427">
    <property type="interactions" value="1837"/>
</dbReference>
<dbReference type="IntAct" id="Q17427">
    <property type="interactions" value="4"/>
</dbReference>
<dbReference type="STRING" id="6239.B0024.12.1"/>
<dbReference type="PaxDb" id="6239-B0024.12"/>
<dbReference type="PeptideAtlas" id="Q17427"/>
<dbReference type="EnsemblMetazoa" id="B0024.12.1">
    <property type="protein sequence ID" value="B0024.12.1"/>
    <property type="gene ID" value="WBGene00001646"/>
</dbReference>
<dbReference type="GeneID" id="179437"/>
<dbReference type="KEGG" id="cel:CELE_B0024.12"/>
<dbReference type="UCSC" id="B0024.12">
    <property type="organism name" value="c. elegans"/>
</dbReference>
<dbReference type="AGR" id="WB:WBGene00001646"/>
<dbReference type="CTD" id="179437"/>
<dbReference type="WormBase" id="B0024.12">
    <property type="protein sequence ID" value="CE05156"/>
    <property type="gene ID" value="WBGene00001646"/>
    <property type="gene designation" value="gna-1"/>
</dbReference>
<dbReference type="eggNOG" id="KOG3396">
    <property type="taxonomic scope" value="Eukaryota"/>
</dbReference>
<dbReference type="GeneTree" id="ENSGT00390000008666"/>
<dbReference type="HOGENOM" id="CLU_072095_2_0_1"/>
<dbReference type="InParanoid" id="Q17427"/>
<dbReference type="OMA" id="LVVEMKF"/>
<dbReference type="OrthoDB" id="10039976at2759"/>
<dbReference type="PhylomeDB" id="Q17427"/>
<dbReference type="BRENDA" id="2.3.1.4">
    <property type="organism ID" value="1045"/>
</dbReference>
<dbReference type="SignaLink" id="Q17427"/>
<dbReference type="UniPathway" id="UPA00113">
    <property type="reaction ID" value="UER00529"/>
</dbReference>
<dbReference type="EvolutionaryTrace" id="Q17427"/>
<dbReference type="PRO" id="PR:Q17427"/>
<dbReference type="Proteomes" id="UP000001940">
    <property type="component" value="Chromosome V"/>
</dbReference>
<dbReference type="Bgee" id="WBGene00001646">
    <property type="expression patterns" value="Expressed in pharyngeal muscle cell (C elegans) and 4 other cell types or tissues"/>
</dbReference>
<dbReference type="GO" id="GO:0004343">
    <property type="term" value="F:glucosamine 6-phosphate N-acetyltransferase activity"/>
    <property type="evidence" value="ECO:0000318"/>
    <property type="project" value="GO_Central"/>
</dbReference>
<dbReference type="GO" id="GO:0006048">
    <property type="term" value="P:UDP-N-acetylglucosamine biosynthetic process"/>
    <property type="evidence" value="ECO:0007669"/>
    <property type="project" value="UniProtKB-UniPathway"/>
</dbReference>
<dbReference type="CDD" id="cd04301">
    <property type="entry name" value="NAT_SF"/>
    <property type="match status" value="1"/>
</dbReference>
<dbReference type="FunFam" id="3.40.630.30:FF:000043">
    <property type="entry name" value="Glucosamine 6-phosphate N-acetyltransferase"/>
    <property type="match status" value="1"/>
</dbReference>
<dbReference type="Gene3D" id="3.40.630.30">
    <property type="match status" value="1"/>
</dbReference>
<dbReference type="InterPro" id="IPR016181">
    <property type="entry name" value="Acyl_CoA_acyltransferase"/>
</dbReference>
<dbReference type="InterPro" id="IPR000182">
    <property type="entry name" value="GNAT_dom"/>
</dbReference>
<dbReference type="InterPro" id="IPR039143">
    <property type="entry name" value="GNPNAT1-like"/>
</dbReference>
<dbReference type="PANTHER" id="PTHR13355">
    <property type="entry name" value="GLUCOSAMINE 6-PHOSPHATE N-ACETYLTRANSFERASE"/>
    <property type="match status" value="1"/>
</dbReference>
<dbReference type="PANTHER" id="PTHR13355:SF11">
    <property type="entry name" value="GLUCOSAMINE 6-PHOSPHATE N-ACETYLTRANSFERASE"/>
    <property type="match status" value="1"/>
</dbReference>
<dbReference type="Pfam" id="PF00583">
    <property type="entry name" value="Acetyltransf_1"/>
    <property type="match status" value="1"/>
</dbReference>
<dbReference type="SUPFAM" id="SSF55729">
    <property type="entry name" value="Acyl-CoA N-acyltransferases (Nat)"/>
    <property type="match status" value="1"/>
</dbReference>
<dbReference type="PROSITE" id="PS51186">
    <property type="entry name" value="GNAT"/>
    <property type="match status" value="1"/>
</dbReference>
<comment type="catalytic activity">
    <reaction evidence="1">
        <text>D-glucosamine 6-phosphate + acetyl-CoA = N-acetyl-D-glucosamine 6-phosphate + CoA + H(+)</text>
        <dbReference type="Rhea" id="RHEA:10292"/>
        <dbReference type="ChEBI" id="CHEBI:15378"/>
        <dbReference type="ChEBI" id="CHEBI:57287"/>
        <dbReference type="ChEBI" id="CHEBI:57288"/>
        <dbReference type="ChEBI" id="CHEBI:57513"/>
        <dbReference type="ChEBI" id="CHEBI:58725"/>
        <dbReference type="EC" id="2.3.1.4"/>
    </reaction>
</comment>
<comment type="pathway">
    <text>Nucleotide-sugar biosynthesis; UDP-N-acetyl-alpha-D-glucosamine biosynthesis; N-acetyl-alpha-D-glucosamine 1-phosphate from alpha-D-glucosamine 6-phosphate (route I): step 1/2.</text>
</comment>
<comment type="similarity">
    <text evidence="3">Belongs to the acetyltransferase family. GNA1 subfamily.</text>
</comment>
<organism>
    <name type="scientific">Caenorhabditis elegans</name>
    <dbReference type="NCBI Taxonomy" id="6239"/>
    <lineage>
        <taxon>Eukaryota</taxon>
        <taxon>Metazoa</taxon>
        <taxon>Ecdysozoa</taxon>
        <taxon>Nematoda</taxon>
        <taxon>Chromadorea</taxon>
        <taxon>Rhabditida</taxon>
        <taxon>Rhabditina</taxon>
        <taxon>Rhabditomorpha</taxon>
        <taxon>Rhabditoidea</taxon>
        <taxon>Rhabditidae</taxon>
        <taxon>Peloderinae</taxon>
        <taxon>Caenorhabditis</taxon>
    </lineage>
</organism>
<evidence type="ECO:0000250" key="1">
    <source>
        <dbReference type="UniProtKB" id="Q96EK6"/>
    </source>
</evidence>
<evidence type="ECO:0000255" key="2">
    <source>
        <dbReference type="PROSITE-ProRule" id="PRU00532"/>
    </source>
</evidence>
<evidence type="ECO:0000305" key="3"/>
<evidence type="ECO:0007829" key="4">
    <source>
        <dbReference type="PDB" id="4AG7"/>
    </source>
</evidence>
<proteinExistence type="evidence at protein level"/>
<sequence length="165" mass="18459">MSHIFDASVLAPHIPSNLPDNFKVRPLAKDDFSKGYVDLLSQLTSVGNLDQEAFEKRFEAMRTSVPNYHIVVIEDSNSQKVVASASLVVEMKFIHGAGSRGRVEDVVVDTEMRRQKLGAVLLKTLVSLGKSLGVYKISLECVPELLPFYSQFGFQDDCNFMTQRF</sequence>
<name>GNA1_CAEEL</name>